<organism>
    <name type="scientific">Oryza sativa subsp. japonica</name>
    <name type="common">Rice</name>
    <dbReference type="NCBI Taxonomy" id="39947"/>
    <lineage>
        <taxon>Eukaryota</taxon>
        <taxon>Viridiplantae</taxon>
        <taxon>Streptophyta</taxon>
        <taxon>Embryophyta</taxon>
        <taxon>Tracheophyta</taxon>
        <taxon>Spermatophyta</taxon>
        <taxon>Magnoliopsida</taxon>
        <taxon>Liliopsida</taxon>
        <taxon>Poales</taxon>
        <taxon>Poaceae</taxon>
        <taxon>BOP clade</taxon>
        <taxon>Oryzoideae</taxon>
        <taxon>Oryzeae</taxon>
        <taxon>Oryzinae</taxon>
        <taxon>Oryza</taxon>
        <taxon>Oryza sativa</taxon>
    </lineage>
</organism>
<accession>Q10Q08</accession>
<accession>A0A0P0VUM6</accession>
<accession>Q7Y069</accession>
<keyword id="KW-0227">DNA damage</keyword>
<keyword id="KW-0233">DNA recombination</keyword>
<keyword id="KW-0234">DNA repair</keyword>
<keyword id="KW-0235">DNA replication</keyword>
<keyword id="KW-0238">DNA-binding</keyword>
<keyword id="KW-0479">Metal-binding</keyword>
<keyword id="KW-0539">Nucleus</keyword>
<keyword id="KW-1185">Reference proteome</keyword>
<keyword id="KW-0862">Zinc</keyword>
<keyword id="KW-0863">Zinc-finger</keyword>
<proteinExistence type="evidence at protein level"/>
<gene>
    <name type="primary">RPA1B</name>
    <name type="synonym">RPA70B</name>
    <name type="ordered locus">Os03g0214100</name>
    <name type="ordered locus">LOC_Os03g11540</name>
    <name type="ORF">OsJ_09906</name>
</gene>
<feature type="chain" id="PRO_0000422621" description="Replication protein A 70 kDa DNA-binding subunit B">
    <location>
        <begin position="1"/>
        <end position="630"/>
    </location>
</feature>
<feature type="DNA-binding region" description="OB">
    <location>
        <begin position="200"/>
        <end position="282"/>
    </location>
</feature>
<feature type="zinc finger region" description="C4-type" evidence="2">
    <location>
        <begin position="496"/>
        <end position="516"/>
    </location>
</feature>
<feature type="sequence conflict" description="In Ref. 1; BAC77529." evidence="6" ref="1">
    <original>N</original>
    <variation>D</variation>
    <location>
        <position position="269"/>
    </location>
</feature>
<feature type="sequence conflict" description="In Ref. 1; BAC77529." evidence="6" ref="1">
    <original>V</original>
    <variation>L</variation>
    <location>
        <position position="411"/>
    </location>
</feature>
<dbReference type="EMBL" id="AB111916">
    <property type="protein sequence ID" value="BAC77529.1"/>
    <property type="molecule type" value="mRNA"/>
</dbReference>
<dbReference type="EMBL" id="DP000009">
    <property type="protein sequence ID" value="ABF94627.1"/>
    <property type="molecule type" value="Genomic_DNA"/>
</dbReference>
<dbReference type="EMBL" id="AP008209">
    <property type="protein sequence ID" value="BAF11283.1"/>
    <property type="molecule type" value="Genomic_DNA"/>
</dbReference>
<dbReference type="EMBL" id="AP014959">
    <property type="protein sequence ID" value="BAS82952.1"/>
    <property type="molecule type" value="Genomic_DNA"/>
</dbReference>
<dbReference type="EMBL" id="CM000140">
    <property type="protein sequence ID" value="EAZ26052.1"/>
    <property type="molecule type" value="Genomic_DNA"/>
</dbReference>
<dbReference type="RefSeq" id="XP_015628911.1">
    <property type="nucleotide sequence ID" value="XM_015773425.1"/>
</dbReference>
<dbReference type="SMR" id="Q10Q08"/>
<dbReference type="FunCoup" id="Q10Q08">
    <property type="interactions" value="91"/>
</dbReference>
<dbReference type="STRING" id="39947.Q10Q08"/>
<dbReference type="PaxDb" id="39947-Q10Q08"/>
<dbReference type="EnsemblPlants" id="Os03t0214100-01">
    <property type="protein sequence ID" value="Os03t0214100-01"/>
    <property type="gene ID" value="Os03g0214100"/>
</dbReference>
<dbReference type="Gramene" id="Os03t0214100-01">
    <property type="protein sequence ID" value="Os03t0214100-01"/>
    <property type="gene ID" value="Os03g0214100"/>
</dbReference>
<dbReference type="KEGG" id="dosa:Os03g0214100"/>
<dbReference type="eggNOG" id="KOG0851">
    <property type="taxonomic scope" value="Eukaryota"/>
</dbReference>
<dbReference type="HOGENOM" id="CLU_012393_3_1_1"/>
<dbReference type="InParanoid" id="Q10Q08"/>
<dbReference type="OMA" id="FNSYAML"/>
<dbReference type="OrthoDB" id="1751331at2759"/>
<dbReference type="PlantReactome" id="R-OSA-9645850">
    <property type="pathway name" value="Activation of pre-replication complex"/>
</dbReference>
<dbReference type="Proteomes" id="UP000000763">
    <property type="component" value="Chromosome 3"/>
</dbReference>
<dbReference type="Proteomes" id="UP000007752">
    <property type="component" value="Chromosome 3"/>
</dbReference>
<dbReference type="Proteomes" id="UP000059680">
    <property type="component" value="Chromosome 3"/>
</dbReference>
<dbReference type="GO" id="GO:0005662">
    <property type="term" value="C:DNA replication factor A complex"/>
    <property type="evidence" value="ECO:0000314"/>
    <property type="project" value="UniProtKB"/>
</dbReference>
<dbReference type="GO" id="GO:0003684">
    <property type="term" value="F:damaged DNA binding"/>
    <property type="evidence" value="ECO:0000318"/>
    <property type="project" value="GO_Central"/>
</dbReference>
<dbReference type="GO" id="GO:0043047">
    <property type="term" value="F:single-stranded telomeric DNA binding"/>
    <property type="evidence" value="ECO:0000318"/>
    <property type="project" value="GO_Central"/>
</dbReference>
<dbReference type="GO" id="GO:0008270">
    <property type="term" value="F:zinc ion binding"/>
    <property type="evidence" value="ECO:0007669"/>
    <property type="project" value="UniProtKB-KW"/>
</dbReference>
<dbReference type="GO" id="GO:0006260">
    <property type="term" value="P:DNA replication"/>
    <property type="evidence" value="ECO:0000318"/>
    <property type="project" value="GO_Central"/>
</dbReference>
<dbReference type="GO" id="GO:0000724">
    <property type="term" value="P:double-strand break repair via homologous recombination"/>
    <property type="evidence" value="ECO:0000318"/>
    <property type="project" value="GO_Central"/>
</dbReference>
<dbReference type="GO" id="GO:0051321">
    <property type="term" value="P:meiotic cell cycle"/>
    <property type="evidence" value="ECO:0000318"/>
    <property type="project" value="GO_Central"/>
</dbReference>
<dbReference type="GO" id="GO:0006289">
    <property type="term" value="P:nucleotide-excision repair"/>
    <property type="evidence" value="ECO:0000318"/>
    <property type="project" value="GO_Central"/>
</dbReference>
<dbReference type="GO" id="GO:0007004">
    <property type="term" value="P:telomere maintenance via telomerase"/>
    <property type="evidence" value="ECO:0000318"/>
    <property type="project" value="GO_Central"/>
</dbReference>
<dbReference type="CDD" id="cd04474">
    <property type="entry name" value="RPA1_DBD_A"/>
    <property type="match status" value="1"/>
</dbReference>
<dbReference type="CDD" id="cd04475">
    <property type="entry name" value="RPA1_DBD_B"/>
    <property type="match status" value="1"/>
</dbReference>
<dbReference type="CDD" id="cd04476">
    <property type="entry name" value="RPA1_DBD_C"/>
    <property type="match status" value="1"/>
</dbReference>
<dbReference type="CDD" id="cd04477">
    <property type="entry name" value="RPA1N"/>
    <property type="match status" value="1"/>
</dbReference>
<dbReference type="DisProt" id="DP01086"/>
<dbReference type="FunFam" id="2.40.50.140:FF:000041">
    <property type="entry name" value="Replication protein A subunit"/>
    <property type="match status" value="1"/>
</dbReference>
<dbReference type="FunFam" id="2.40.50.140:FF:000064">
    <property type="entry name" value="Replication protein A subunit"/>
    <property type="match status" value="1"/>
</dbReference>
<dbReference type="FunFam" id="2.40.50.140:FF:000090">
    <property type="entry name" value="Replication protein A subunit"/>
    <property type="match status" value="1"/>
</dbReference>
<dbReference type="FunFam" id="2.40.50.140:FF:000257">
    <property type="entry name" value="Replication protein A subunit"/>
    <property type="match status" value="1"/>
</dbReference>
<dbReference type="Gene3D" id="2.40.50.140">
    <property type="entry name" value="Nucleic acid-binding proteins"/>
    <property type="match status" value="4"/>
</dbReference>
<dbReference type="InterPro" id="IPR047192">
    <property type="entry name" value="Euk_RPA1_DBD_C"/>
</dbReference>
<dbReference type="InterPro" id="IPR012340">
    <property type="entry name" value="NA-bd_OB-fold"/>
</dbReference>
<dbReference type="InterPro" id="IPR013955">
    <property type="entry name" value="Rep_factor-A_C"/>
</dbReference>
<dbReference type="InterPro" id="IPR007199">
    <property type="entry name" value="Rep_factor-A_N"/>
</dbReference>
<dbReference type="InterPro" id="IPR031657">
    <property type="entry name" value="REPA_OB_2"/>
</dbReference>
<dbReference type="InterPro" id="IPR004591">
    <property type="entry name" value="Rfa1"/>
</dbReference>
<dbReference type="InterPro" id="IPR003871">
    <property type="entry name" value="RFA1B/D_OB_1st"/>
</dbReference>
<dbReference type="NCBIfam" id="TIGR00617">
    <property type="entry name" value="rpa1"/>
    <property type="match status" value="1"/>
</dbReference>
<dbReference type="PANTHER" id="PTHR47165">
    <property type="entry name" value="OS03G0429900 PROTEIN"/>
    <property type="match status" value="1"/>
</dbReference>
<dbReference type="PANTHER" id="PTHR47165:SF4">
    <property type="entry name" value="OS03G0429900 PROTEIN"/>
    <property type="match status" value="1"/>
</dbReference>
<dbReference type="Pfam" id="PF02721">
    <property type="entry name" value="DUF223"/>
    <property type="match status" value="1"/>
</dbReference>
<dbReference type="Pfam" id="PF04057">
    <property type="entry name" value="Rep-A_N"/>
    <property type="match status" value="1"/>
</dbReference>
<dbReference type="Pfam" id="PF08646">
    <property type="entry name" value="Rep_fac-A_C"/>
    <property type="match status" value="1"/>
</dbReference>
<dbReference type="Pfam" id="PF16900">
    <property type="entry name" value="REPA_OB_2"/>
    <property type="match status" value="1"/>
</dbReference>
<dbReference type="SUPFAM" id="SSF50249">
    <property type="entry name" value="Nucleic acid-binding proteins"/>
    <property type="match status" value="4"/>
</dbReference>
<sequence>MDSDAAPSVTPGAVAFVLENASPDAATGVPVPEIVLQVVDLKPIGTRFTFLASDGKDKIKTMLLTQLAPEVRSGNIQNLGVIRVLDYTCNTIGEKQEKVLIITKLEVVFKALDSEIKCEAEKQEEKPAILLSPKEESVVLSKPTNAPPLPPVVLKPKQEVKSASQIVNEQRGNAAPAARLAMTRRVHPLISLNPYQGNWIIKVRVTSKGNLRTYKNARGEGCVFNVELTDVDGTQIQATMFNEAAKKFYPMFELGKVYYISKGSLRVANKQFKTVHNDYEMTLNENAVVEEAEGETFIPQIQYNFVKIDQLGPYVGGRELVDVIGVVQSVSPTLSVRRKIDNETIPKRDIVVADDSSKTVTISLWNDLATTTGQELLDMVDSAPIIAIKSLKVSDFQGLSLSTVGRSTIVVNPDLPEAEQLRAWYDSEGKGTSMASIGSDMGASRVGGARSMYSDRVFLSHITSDPNLGQDKPVFFSLNAYISLIKPDQTMWYRACKTCNKKVTEAIGSGYWCEGCQKNDAECSLRYIMVIKVSDPTGEAWLSLFNDQAERIVGCSADELDRIRKEEGDDSYLLKLKEATWVPHLFRVSVTQNEYMNEKRQRITVRSEAPVDHAAEAKYMLEEIAKLTGC</sequence>
<reference key="1">
    <citation type="journal article" date="2001" name="Gene">
        <title>Two types of replication protein A 70 kDa subunit in rice, Oryza sativa: molecular cloning, characterization, and cellular &amp; tissue distribution.</title>
        <authorList>
            <person name="Ishibashi T."/>
            <person name="Kimura S."/>
            <person name="Furukawa T."/>
            <person name="Hatanaka M."/>
            <person name="Hashimoto J."/>
            <person name="Sakaguchi K."/>
        </authorList>
    </citation>
    <scope>NUCLEOTIDE SEQUENCE [MRNA]</scope>
    <scope>TISSUE SPECIFICITY</scope>
    <scope>INDUCTION</scope>
    <source>
        <strain>cv. Nipponbare</strain>
    </source>
</reference>
<reference key="2">
    <citation type="journal article" date="2005" name="Genome Res.">
        <title>Sequence, annotation, and analysis of synteny between rice chromosome 3 and diverged grass species.</title>
        <authorList>
            <consortium name="The rice chromosome 3 sequencing consortium"/>
            <person name="Buell C.R."/>
            <person name="Yuan Q."/>
            <person name="Ouyang S."/>
            <person name="Liu J."/>
            <person name="Zhu W."/>
            <person name="Wang A."/>
            <person name="Maiti R."/>
            <person name="Haas B."/>
            <person name="Wortman J."/>
            <person name="Pertea M."/>
            <person name="Jones K.M."/>
            <person name="Kim M."/>
            <person name="Overton L."/>
            <person name="Tsitrin T."/>
            <person name="Fadrosh D."/>
            <person name="Bera J."/>
            <person name="Weaver B."/>
            <person name="Jin S."/>
            <person name="Johri S."/>
            <person name="Reardon M."/>
            <person name="Webb K."/>
            <person name="Hill J."/>
            <person name="Moffat K."/>
            <person name="Tallon L."/>
            <person name="Van Aken S."/>
            <person name="Lewis M."/>
            <person name="Utterback T."/>
            <person name="Feldblyum T."/>
            <person name="Zismann V."/>
            <person name="Iobst S."/>
            <person name="Hsiao J."/>
            <person name="de Vazeille A.R."/>
            <person name="Salzberg S.L."/>
            <person name="White O."/>
            <person name="Fraser C.M."/>
            <person name="Yu Y."/>
            <person name="Kim H."/>
            <person name="Rambo T."/>
            <person name="Currie J."/>
            <person name="Collura K."/>
            <person name="Kernodle-Thompson S."/>
            <person name="Wei F."/>
            <person name="Kudrna K."/>
            <person name="Ammiraju J.S.S."/>
            <person name="Luo M."/>
            <person name="Goicoechea J.L."/>
            <person name="Wing R.A."/>
            <person name="Henry D."/>
            <person name="Oates R."/>
            <person name="Palmer M."/>
            <person name="Pries G."/>
            <person name="Saski C."/>
            <person name="Simmons J."/>
            <person name="Soderlund C."/>
            <person name="Nelson W."/>
            <person name="de la Bastide M."/>
            <person name="Spiegel L."/>
            <person name="Nascimento L."/>
            <person name="Huang E."/>
            <person name="Preston R."/>
            <person name="Zutavern T."/>
            <person name="Palmer L."/>
            <person name="O'Shaughnessy A."/>
            <person name="Dike S."/>
            <person name="McCombie W.R."/>
            <person name="Minx P."/>
            <person name="Cordum H."/>
            <person name="Wilson R."/>
            <person name="Jin W."/>
            <person name="Lee H.R."/>
            <person name="Jiang J."/>
            <person name="Jackson S."/>
        </authorList>
    </citation>
    <scope>NUCLEOTIDE SEQUENCE [LARGE SCALE GENOMIC DNA]</scope>
    <source>
        <strain>cv. Nipponbare</strain>
    </source>
</reference>
<reference key="3">
    <citation type="journal article" date="2005" name="Nature">
        <title>The map-based sequence of the rice genome.</title>
        <authorList>
            <consortium name="International rice genome sequencing project (IRGSP)"/>
        </authorList>
    </citation>
    <scope>NUCLEOTIDE SEQUENCE [LARGE SCALE GENOMIC DNA]</scope>
    <source>
        <strain>cv. Nipponbare</strain>
    </source>
</reference>
<reference key="4">
    <citation type="journal article" date="2008" name="Nucleic Acids Res.">
        <title>The rice annotation project database (RAP-DB): 2008 update.</title>
        <authorList>
            <consortium name="The rice annotation project (RAP)"/>
        </authorList>
    </citation>
    <scope>GENOME REANNOTATION</scope>
    <source>
        <strain>cv. Nipponbare</strain>
    </source>
</reference>
<reference key="5">
    <citation type="journal article" date="2013" name="Rice">
        <title>Improvement of the Oryza sativa Nipponbare reference genome using next generation sequence and optical map data.</title>
        <authorList>
            <person name="Kawahara Y."/>
            <person name="de la Bastide M."/>
            <person name="Hamilton J.P."/>
            <person name="Kanamori H."/>
            <person name="McCombie W.R."/>
            <person name="Ouyang S."/>
            <person name="Schwartz D.C."/>
            <person name="Tanaka T."/>
            <person name="Wu J."/>
            <person name="Zhou S."/>
            <person name="Childs K.L."/>
            <person name="Davidson R.M."/>
            <person name="Lin H."/>
            <person name="Quesada-Ocampo L."/>
            <person name="Vaillancourt B."/>
            <person name="Sakai H."/>
            <person name="Lee S.S."/>
            <person name="Kim J."/>
            <person name="Numa H."/>
            <person name="Itoh T."/>
            <person name="Buell C.R."/>
            <person name="Matsumoto T."/>
        </authorList>
    </citation>
    <scope>GENOME REANNOTATION</scope>
    <source>
        <strain>cv. Nipponbare</strain>
    </source>
</reference>
<reference key="6">
    <citation type="journal article" date="2005" name="PLoS Biol.">
        <title>The genomes of Oryza sativa: a history of duplications.</title>
        <authorList>
            <person name="Yu J."/>
            <person name="Wang J."/>
            <person name="Lin W."/>
            <person name="Li S."/>
            <person name="Li H."/>
            <person name="Zhou J."/>
            <person name="Ni P."/>
            <person name="Dong W."/>
            <person name="Hu S."/>
            <person name="Zeng C."/>
            <person name="Zhang J."/>
            <person name="Zhang Y."/>
            <person name="Li R."/>
            <person name="Xu Z."/>
            <person name="Li S."/>
            <person name="Li X."/>
            <person name="Zheng H."/>
            <person name="Cong L."/>
            <person name="Lin L."/>
            <person name="Yin J."/>
            <person name="Geng J."/>
            <person name="Li G."/>
            <person name="Shi J."/>
            <person name="Liu J."/>
            <person name="Lv H."/>
            <person name="Li J."/>
            <person name="Wang J."/>
            <person name="Deng Y."/>
            <person name="Ran L."/>
            <person name="Shi X."/>
            <person name="Wang X."/>
            <person name="Wu Q."/>
            <person name="Li C."/>
            <person name="Ren X."/>
            <person name="Wang J."/>
            <person name="Wang X."/>
            <person name="Li D."/>
            <person name="Liu D."/>
            <person name="Zhang X."/>
            <person name="Ji Z."/>
            <person name="Zhao W."/>
            <person name="Sun Y."/>
            <person name="Zhang Z."/>
            <person name="Bao J."/>
            <person name="Han Y."/>
            <person name="Dong L."/>
            <person name="Ji J."/>
            <person name="Chen P."/>
            <person name="Wu S."/>
            <person name="Liu J."/>
            <person name="Xiao Y."/>
            <person name="Bu D."/>
            <person name="Tan J."/>
            <person name="Yang L."/>
            <person name="Ye C."/>
            <person name="Zhang J."/>
            <person name="Xu J."/>
            <person name="Zhou Y."/>
            <person name="Yu Y."/>
            <person name="Zhang B."/>
            <person name="Zhuang S."/>
            <person name="Wei H."/>
            <person name="Liu B."/>
            <person name="Lei M."/>
            <person name="Yu H."/>
            <person name="Li Y."/>
            <person name="Xu H."/>
            <person name="Wei S."/>
            <person name="He X."/>
            <person name="Fang L."/>
            <person name="Zhang Z."/>
            <person name="Zhang Y."/>
            <person name="Huang X."/>
            <person name="Su Z."/>
            <person name="Tong W."/>
            <person name="Li J."/>
            <person name="Tong Z."/>
            <person name="Li S."/>
            <person name="Ye J."/>
            <person name="Wang L."/>
            <person name="Fang L."/>
            <person name="Lei T."/>
            <person name="Chen C.-S."/>
            <person name="Chen H.-C."/>
            <person name="Xu Z."/>
            <person name="Li H."/>
            <person name="Huang H."/>
            <person name="Zhang F."/>
            <person name="Xu H."/>
            <person name="Li N."/>
            <person name="Zhao C."/>
            <person name="Li S."/>
            <person name="Dong L."/>
            <person name="Huang Y."/>
            <person name="Li L."/>
            <person name="Xi Y."/>
            <person name="Qi Q."/>
            <person name="Li W."/>
            <person name="Zhang B."/>
            <person name="Hu W."/>
            <person name="Zhang Y."/>
            <person name="Tian X."/>
            <person name="Jiao Y."/>
            <person name="Liang X."/>
            <person name="Jin J."/>
            <person name="Gao L."/>
            <person name="Zheng W."/>
            <person name="Hao B."/>
            <person name="Liu S.-M."/>
            <person name="Wang W."/>
            <person name="Yuan L."/>
            <person name="Cao M."/>
            <person name="McDermott J."/>
            <person name="Samudrala R."/>
            <person name="Wang J."/>
            <person name="Wong G.K.-S."/>
            <person name="Yang H."/>
        </authorList>
    </citation>
    <scope>NUCLEOTIDE SEQUENCE [LARGE SCALE GENOMIC DNA]</scope>
    <source>
        <strain>cv. Nipponbare</strain>
    </source>
</reference>
<reference key="7">
    <citation type="journal article" date="2005" name="FEBS J.">
        <title>Two types of replication protein A in seed plants.</title>
        <authorList>
            <person name="Ishibashi T."/>
            <person name="Koga A."/>
            <person name="Yamamoto T."/>
            <person name="Uchiyama Y."/>
            <person name="Mori Y."/>
            <person name="Hashimoto J."/>
            <person name="Kimura S."/>
            <person name="Sakaguchi K."/>
        </authorList>
    </citation>
    <scope>FUNCTION</scope>
    <scope>INTERACTION WITH RPA2A</scope>
</reference>
<reference key="8">
    <citation type="journal article" date="2006" name="J. Biochem.">
        <title>A higher plant has three different types of RPA heterotrimeric complex.</title>
        <authorList>
            <person name="Ishibashi T."/>
            <person name="Kimura S."/>
            <person name="Sakaguchi K."/>
        </authorList>
    </citation>
    <scope>INTERACTION WITH RPA2A</scope>
</reference>
<evidence type="ECO:0000250" key="1"/>
<evidence type="ECO:0000255" key="2"/>
<evidence type="ECO:0000269" key="3">
    <source>
    </source>
</evidence>
<evidence type="ECO:0000269" key="4">
    <source>
    </source>
</evidence>
<evidence type="ECO:0000269" key="5">
    <source>
    </source>
</evidence>
<evidence type="ECO:0000305" key="6"/>
<comment type="function">
    <text evidence="1 4">Component of the replication protein A complex (RPA) required for DNA recombination, repair and replication. The activity of RPA is mediated by single-stranded DNA binding and protein interactions. Probably involved in repair of double-strand DNA breaks (DSBs) induced by genotoxic stresses (By similarity).</text>
</comment>
<comment type="subunit">
    <text evidence="1 4 5">Heterotrimer of RPA1, RPA2 and RPA3 (canonical replication protein A complex) (By similarity). Interacts with RPA2A.</text>
</comment>
<comment type="subcellular location">
    <subcellularLocation>
        <location evidence="1">Nucleus</location>
    </subcellularLocation>
</comment>
<comment type="tissue specificity">
    <text evidence="3">Expressed in root tips, roots, shoot apical meristem (SAM) and young leaves, and at lower levels in mature leaves, flag leaves and ears.</text>
</comment>
<comment type="induction">
    <text evidence="3">Repressed by sucrose starvation.</text>
</comment>
<comment type="similarity">
    <text evidence="6">Belongs to the replication factor A protein 1 family.</text>
</comment>
<protein>
    <recommendedName>
        <fullName>Replication protein A 70 kDa DNA-binding subunit B</fullName>
        <shortName>OsRPA70b</shortName>
    </recommendedName>
    <alternativeName>
        <fullName>Replication factor A protein 1B</fullName>
    </alternativeName>
    <alternativeName>
        <fullName>Replication protein A 1B</fullName>
    </alternativeName>
</protein>
<name>RFA1B_ORYSJ</name>